<reference key="1">
    <citation type="journal article" date="2009" name="PLoS Pathog.">
        <title>Genomic evidence for the evolution of Streptococcus equi: host restriction, increased virulence, and genetic exchange with human pathogens.</title>
        <authorList>
            <person name="Holden M.T.G."/>
            <person name="Heather Z."/>
            <person name="Paillot R."/>
            <person name="Steward K.F."/>
            <person name="Webb K."/>
            <person name="Ainslie F."/>
            <person name="Jourdan T."/>
            <person name="Bason N.C."/>
            <person name="Holroyd N.E."/>
            <person name="Mungall K."/>
            <person name="Quail M.A."/>
            <person name="Sanders M."/>
            <person name="Simmonds M."/>
            <person name="Willey D."/>
            <person name="Brooks K."/>
            <person name="Aanensen D.M."/>
            <person name="Spratt B.G."/>
            <person name="Jolley K.A."/>
            <person name="Maiden M.C.J."/>
            <person name="Kehoe M."/>
            <person name="Chanter N."/>
            <person name="Bentley S.D."/>
            <person name="Robinson C."/>
            <person name="Maskell D.J."/>
            <person name="Parkhill J."/>
            <person name="Waller A.S."/>
        </authorList>
    </citation>
    <scope>NUCLEOTIDE SEQUENCE [LARGE SCALE GENOMIC DNA]</scope>
    <source>
        <strain>4047</strain>
    </source>
</reference>
<keyword id="KW-1003">Cell membrane</keyword>
<keyword id="KW-0378">Hydrolase</keyword>
<keyword id="KW-0472">Membrane</keyword>
<keyword id="KW-0479">Metal-binding</keyword>
<keyword id="KW-0482">Metalloprotease</keyword>
<keyword id="KW-0645">Protease</keyword>
<keyword id="KW-0812">Transmembrane</keyword>
<keyword id="KW-1133">Transmembrane helix</keyword>
<keyword id="KW-0862">Zinc</keyword>
<organism>
    <name type="scientific">Streptococcus equi subsp. equi (strain 4047)</name>
    <dbReference type="NCBI Taxonomy" id="553482"/>
    <lineage>
        <taxon>Bacteria</taxon>
        <taxon>Bacillati</taxon>
        <taxon>Bacillota</taxon>
        <taxon>Bacilli</taxon>
        <taxon>Lactobacillales</taxon>
        <taxon>Streptococcaceae</taxon>
        <taxon>Streptococcus</taxon>
    </lineage>
</organism>
<comment type="cofactor">
    <cofactor evidence="1">
        <name>Zn(2+)</name>
        <dbReference type="ChEBI" id="CHEBI:29105"/>
    </cofactor>
    <text evidence="1">Binds 1 zinc ion per subunit.</text>
</comment>
<comment type="subcellular location">
    <subcellularLocation>
        <location evidence="1">Cell membrane</location>
        <topology evidence="1">Multi-pass membrane protein</topology>
    </subcellularLocation>
</comment>
<comment type="similarity">
    <text evidence="1">Belongs to the peptidase M48B family.</text>
</comment>
<protein>
    <recommendedName>
        <fullName evidence="1">Protease HtpX homolog</fullName>
        <ecNumber evidence="1">3.4.24.-</ecNumber>
    </recommendedName>
</protein>
<sequence>MLYQQISQNKRRTVILLFAFFVLLVVIGAAAGYLLADSYQLGAAFALIIGAIYAFSMIFQSTSLVMGMNKAKEITVNDAPDFFHIVEDMALVAQIPMPRVFIIDDPSLNAFATGSSPQNAAVAATTGLLKVMNREELEAVIGHEVSHIRNYDIRISTIAVALASAVTLISSIGGRMMWYSGGRRRDNDRNDNGFGAIMLIFSILSLILAPLAASLVQLAISRQREYLADASSVALTRNPEGMIRALQKLSNSQPMTHPVDDASAALYINEPRKKEKLSALFSTHPPIEDRIERLKHM</sequence>
<proteinExistence type="inferred from homology"/>
<name>HTPX_STRE4</name>
<feature type="chain" id="PRO_1000124238" description="Protease HtpX homolog">
    <location>
        <begin position="1"/>
        <end position="297"/>
    </location>
</feature>
<feature type="transmembrane region" description="Helical" evidence="1">
    <location>
        <begin position="14"/>
        <end position="34"/>
    </location>
</feature>
<feature type="transmembrane region" description="Helical" evidence="1">
    <location>
        <begin position="39"/>
        <end position="59"/>
    </location>
</feature>
<feature type="transmembrane region" description="Helical" evidence="1">
    <location>
        <begin position="158"/>
        <end position="178"/>
    </location>
</feature>
<feature type="transmembrane region" description="Helical" evidence="1">
    <location>
        <begin position="193"/>
        <end position="213"/>
    </location>
</feature>
<feature type="active site" evidence="1">
    <location>
        <position position="144"/>
    </location>
</feature>
<feature type="binding site" evidence="1">
    <location>
        <position position="143"/>
    </location>
    <ligand>
        <name>Zn(2+)</name>
        <dbReference type="ChEBI" id="CHEBI:29105"/>
        <note>catalytic</note>
    </ligand>
</feature>
<feature type="binding site" evidence="1">
    <location>
        <position position="147"/>
    </location>
    <ligand>
        <name>Zn(2+)</name>
        <dbReference type="ChEBI" id="CHEBI:29105"/>
        <note>catalytic</note>
    </ligand>
</feature>
<feature type="binding site" evidence="1">
    <location>
        <position position="225"/>
    </location>
    <ligand>
        <name>Zn(2+)</name>
        <dbReference type="ChEBI" id="CHEBI:29105"/>
        <note>catalytic</note>
    </ligand>
</feature>
<dbReference type="EC" id="3.4.24.-" evidence="1"/>
<dbReference type="EMBL" id="FM204883">
    <property type="protein sequence ID" value="CAW95083.1"/>
    <property type="molecule type" value="Genomic_DNA"/>
</dbReference>
<dbReference type="RefSeq" id="WP_012680072.1">
    <property type="nucleotide sequence ID" value="NC_012471.1"/>
</dbReference>
<dbReference type="KEGG" id="seu:SEQ_1892"/>
<dbReference type="HOGENOM" id="CLU_042266_2_1_9"/>
<dbReference type="OrthoDB" id="15218at2"/>
<dbReference type="Proteomes" id="UP000001365">
    <property type="component" value="Chromosome"/>
</dbReference>
<dbReference type="GO" id="GO:0005886">
    <property type="term" value="C:plasma membrane"/>
    <property type="evidence" value="ECO:0007669"/>
    <property type="project" value="UniProtKB-SubCell"/>
</dbReference>
<dbReference type="GO" id="GO:0004222">
    <property type="term" value="F:metalloendopeptidase activity"/>
    <property type="evidence" value="ECO:0007669"/>
    <property type="project" value="UniProtKB-UniRule"/>
</dbReference>
<dbReference type="GO" id="GO:0008270">
    <property type="term" value="F:zinc ion binding"/>
    <property type="evidence" value="ECO:0007669"/>
    <property type="project" value="UniProtKB-UniRule"/>
</dbReference>
<dbReference type="GO" id="GO:0006508">
    <property type="term" value="P:proteolysis"/>
    <property type="evidence" value="ECO:0007669"/>
    <property type="project" value="UniProtKB-KW"/>
</dbReference>
<dbReference type="CDD" id="cd07340">
    <property type="entry name" value="M48B_Htpx_like"/>
    <property type="match status" value="1"/>
</dbReference>
<dbReference type="Gene3D" id="3.30.2010.10">
    <property type="entry name" value="Metalloproteases ('zincins'), catalytic domain"/>
    <property type="match status" value="1"/>
</dbReference>
<dbReference type="HAMAP" id="MF_00188">
    <property type="entry name" value="Pept_M48_protease_HtpX"/>
    <property type="match status" value="1"/>
</dbReference>
<dbReference type="InterPro" id="IPR050083">
    <property type="entry name" value="HtpX_protease"/>
</dbReference>
<dbReference type="InterPro" id="IPR022919">
    <property type="entry name" value="Pept_M48_protease_HtpX"/>
</dbReference>
<dbReference type="InterPro" id="IPR001915">
    <property type="entry name" value="Peptidase_M48"/>
</dbReference>
<dbReference type="NCBIfam" id="NF003425">
    <property type="entry name" value="PRK04897.1"/>
    <property type="match status" value="1"/>
</dbReference>
<dbReference type="PANTHER" id="PTHR43221">
    <property type="entry name" value="PROTEASE HTPX"/>
    <property type="match status" value="1"/>
</dbReference>
<dbReference type="PANTHER" id="PTHR43221:SF1">
    <property type="entry name" value="PROTEASE HTPX"/>
    <property type="match status" value="1"/>
</dbReference>
<dbReference type="Pfam" id="PF01435">
    <property type="entry name" value="Peptidase_M48"/>
    <property type="match status" value="1"/>
</dbReference>
<accession>C0M819</accession>
<evidence type="ECO:0000255" key="1">
    <source>
        <dbReference type="HAMAP-Rule" id="MF_00188"/>
    </source>
</evidence>
<gene>
    <name evidence="1" type="primary">htpX</name>
    <name type="ordered locus">SEQ_1892</name>
</gene>